<proteinExistence type="predicted"/>
<comment type="sequence caution" evidence="1">
    <conflict type="frameshift">
        <sequence resource="EMBL-CDS" id="AAA65436"/>
    </conflict>
    <text>The frameshift in position 320 separates TM_0929 and TM_0928.</text>
</comment>
<comment type="sequence caution" evidence="1">
    <conflict type="frameshift">
        <sequence resource="EMBL-CDS" id="CAA57668"/>
    </conflict>
    <text>The frameshift in position 320 separates TM_0929 and TM_0928.</text>
</comment>
<reference key="1">
    <citation type="journal article" date="1994" name="EMBO J.">
        <title>Sequence, assembly and evolution of a primordial ferredoxin from Thermotoga maritima.</title>
        <authorList>
            <person name="Darimont B."/>
            <person name="Sterner R."/>
        </authorList>
    </citation>
    <scope>NUCLEOTIDE SEQUENCE [GENOMIC DNA]</scope>
    <source>
        <strain>ATCC 43589 / DSM 3109 / JCM 10099 / NBRC 100826 / MSB8</strain>
    </source>
</reference>
<reference key="2">
    <citation type="journal article" date="1999" name="Nature">
        <title>Evidence for lateral gene transfer between Archaea and Bacteria from genome sequence of Thermotoga maritima.</title>
        <authorList>
            <person name="Nelson K.E."/>
            <person name="Clayton R.A."/>
            <person name="Gill S.R."/>
            <person name="Gwinn M.L."/>
            <person name="Dodson R.J."/>
            <person name="Haft D.H."/>
            <person name="Hickey E.K."/>
            <person name="Peterson J.D."/>
            <person name="Nelson W.C."/>
            <person name="Ketchum K.A."/>
            <person name="McDonald L.A."/>
            <person name="Utterback T.R."/>
            <person name="Malek J.A."/>
            <person name="Linher K.D."/>
            <person name="Garrett M.M."/>
            <person name="Stewart A.M."/>
            <person name="Cotton M.D."/>
            <person name="Pratt M.S."/>
            <person name="Phillips C.A."/>
            <person name="Richardson D.L."/>
            <person name="Heidelberg J.F."/>
            <person name="Sutton G.G."/>
            <person name="Fleischmann R.D."/>
            <person name="Eisen J.A."/>
            <person name="White O."/>
            <person name="Salzberg S.L."/>
            <person name="Smith H.O."/>
            <person name="Venter J.C."/>
            <person name="Fraser C.M."/>
        </authorList>
    </citation>
    <scope>NUCLEOTIDE SEQUENCE [LARGE SCALE GENOMIC DNA]</scope>
    <source>
        <strain>ATCC 43589 / DSM 3109 / JCM 10099 / NBRC 100826 / MSB8</strain>
    </source>
</reference>
<name>Y929_THEMA</name>
<dbReference type="EMBL" id="U24145">
    <property type="protein sequence ID" value="AAA65436.1"/>
    <property type="status" value="ALT_FRAME"/>
    <property type="molecule type" value="Genomic_DNA"/>
</dbReference>
<dbReference type="EMBL" id="X82178">
    <property type="protein sequence ID" value="CAA57668.1"/>
    <property type="status" value="ALT_FRAME"/>
    <property type="molecule type" value="Genomic_DNA"/>
</dbReference>
<dbReference type="EMBL" id="AE000512">
    <property type="protein sequence ID" value="AAD36010.1"/>
    <property type="molecule type" value="Genomic_DNA"/>
</dbReference>
<dbReference type="PIR" id="A72315">
    <property type="entry name" value="A72315"/>
</dbReference>
<dbReference type="RefSeq" id="NP_228737.1">
    <property type="nucleotide sequence ID" value="NC_000853.1"/>
</dbReference>
<dbReference type="RefSeq" id="WP_004080633.1">
    <property type="nucleotide sequence ID" value="NC_000853.1"/>
</dbReference>
<dbReference type="SMR" id="P56727"/>
<dbReference type="STRING" id="243274.TM_0929"/>
<dbReference type="PaxDb" id="243274-THEMA_09705"/>
<dbReference type="EnsemblBacteria" id="AAD36010">
    <property type="protein sequence ID" value="AAD36010"/>
    <property type="gene ID" value="TM_0929"/>
</dbReference>
<dbReference type="KEGG" id="tma:TM0929"/>
<dbReference type="KEGG" id="tmi:THEMA_09705"/>
<dbReference type="KEGG" id="tmm:Tmari_0931"/>
<dbReference type="KEGG" id="tmw:THMA_0951"/>
<dbReference type="eggNOG" id="COG3864">
    <property type="taxonomic scope" value="Bacteria"/>
</dbReference>
<dbReference type="InParanoid" id="P56727"/>
<dbReference type="OrthoDB" id="40767at2"/>
<dbReference type="Proteomes" id="UP000008183">
    <property type="component" value="Chromosome"/>
</dbReference>
<dbReference type="InterPro" id="IPR025154">
    <property type="entry name" value="Put_metallopeptidase_dom"/>
</dbReference>
<dbReference type="InterPro" id="IPR018698">
    <property type="entry name" value="VWA-like_dom"/>
</dbReference>
<dbReference type="PANTHER" id="PTHR38730">
    <property type="entry name" value="SLL7028 PROTEIN"/>
    <property type="match status" value="1"/>
</dbReference>
<dbReference type="PANTHER" id="PTHR38730:SF1">
    <property type="entry name" value="SLL7028 PROTEIN"/>
    <property type="match status" value="1"/>
</dbReference>
<dbReference type="Pfam" id="PF09967">
    <property type="entry name" value="DUF2201"/>
    <property type="match status" value="1"/>
</dbReference>
<dbReference type="Pfam" id="PF13203">
    <property type="entry name" value="DUF2201_N"/>
    <property type="match status" value="1"/>
</dbReference>
<organism>
    <name type="scientific">Thermotoga maritima (strain ATCC 43589 / DSM 3109 / JCM 10099 / NBRC 100826 / MSB8)</name>
    <dbReference type="NCBI Taxonomy" id="243274"/>
    <lineage>
        <taxon>Bacteria</taxon>
        <taxon>Thermotogati</taxon>
        <taxon>Thermotogota</taxon>
        <taxon>Thermotogae</taxon>
        <taxon>Thermotogales</taxon>
        <taxon>Thermotogaceae</taxon>
        <taxon>Thermotoga</taxon>
    </lineage>
</organism>
<gene>
    <name type="ordered locus">TM_0929</name>
</gene>
<keyword id="KW-1185">Reference proteome</keyword>
<sequence>MKGEETLKKALLNIGKESPFYYYVLLGVKLVPSKNTRNLKLSFSTTGDVMLLYNPEAIGKKPLRMVQALLIHEVMHIVLQHFRIKPKDERDRKIWDLAMDAAINQYIPELAAFGVPLDVLVKEGHTTDNDTLFVLPPEWMMFENAEMYHKWILEEMERLGRYDVEVVAEFRDNVDDHSGLFEEDVPVEMILDLTKDRTKKAFNLFGNTLPSGVRREVSLSLENPELDWKTLLRRFFGVSIKADRYTTPLRPNRRYDHLPGWRNEYLPRIAAVVDTSGSIVEKELNQFISELEKISNIAGEELWLVQVDKSVTSAMKYRSGKWKDLEIVGGGSTDLQPAIDYSERVLRSEGTVVFTDGHTDVPIARRRILFVLSRYHNEEFLKEARKMYGRDAVVVLS</sequence>
<feature type="chain" id="PRO_0000216216" description="Uncharacterized protein TM_0929">
    <location>
        <begin position="1"/>
        <end position="397"/>
    </location>
</feature>
<evidence type="ECO:0000305" key="1"/>
<protein>
    <recommendedName>
        <fullName>Uncharacterized protein TM_0929</fullName>
    </recommendedName>
</protein>
<accession>P56727</accession>
<accession>P46803</accession>